<feature type="chain" id="PRO_0000302446" description="Glycine cleavage system H protein">
    <location>
        <begin position="1"/>
        <end position="126"/>
    </location>
</feature>
<feature type="domain" description="Lipoyl-binding" evidence="2">
    <location>
        <begin position="22"/>
        <end position="104"/>
    </location>
</feature>
<feature type="modified residue" description="N6-lipoyllysine" evidence="1">
    <location>
        <position position="63"/>
    </location>
</feature>
<dbReference type="EMBL" id="AP008934">
    <property type="protein sequence ID" value="BAE19014.1"/>
    <property type="molecule type" value="Genomic_DNA"/>
</dbReference>
<dbReference type="RefSeq" id="WP_011303547.1">
    <property type="nucleotide sequence ID" value="NZ_MTGA01000039.1"/>
</dbReference>
<dbReference type="SMR" id="Q49W45"/>
<dbReference type="GeneID" id="3615028"/>
<dbReference type="KEGG" id="ssp:SSP1869"/>
<dbReference type="PATRIC" id="fig|342451.11.peg.1866"/>
<dbReference type="eggNOG" id="COG0509">
    <property type="taxonomic scope" value="Bacteria"/>
</dbReference>
<dbReference type="HOGENOM" id="CLU_097408_2_2_9"/>
<dbReference type="OrthoDB" id="9796712at2"/>
<dbReference type="Proteomes" id="UP000006371">
    <property type="component" value="Chromosome"/>
</dbReference>
<dbReference type="GO" id="GO:0005829">
    <property type="term" value="C:cytosol"/>
    <property type="evidence" value="ECO:0007669"/>
    <property type="project" value="TreeGrafter"/>
</dbReference>
<dbReference type="GO" id="GO:0005960">
    <property type="term" value="C:glycine cleavage complex"/>
    <property type="evidence" value="ECO:0007669"/>
    <property type="project" value="InterPro"/>
</dbReference>
<dbReference type="GO" id="GO:0019464">
    <property type="term" value="P:glycine decarboxylation via glycine cleavage system"/>
    <property type="evidence" value="ECO:0007669"/>
    <property type="project" value="UniProtKB-UniRule"/>
</dbReference>
<dbReference type="CDD" id="cd06848">
    <property type="entry name" value="GCS_H"/>
    <property type="match status" value="1"/>
</dbReference>
<dbReference type="Gene3D" id="2.40.50.100">
    <property type="match status" value="1"/>
</dbReference>
<dbReference type="HAMAP" id="MF_00272">
    <property type="entry name" value="GcvH"/>
    <property type="match status" value="1"/>
</dbReference>
<dbReference type="InterPro" id="IPR003016">
    <property type="entry name" value="2-oxoA_DH_lipoyl-BS"/>
</dbReference>
<dbReference type="InterPro" id="IPR000089">
    <property type="entry name" value="Biotin_lipoyl"/>
</dbReference>
<dbReference type="InterPro" id="IPR002930">
    <property type="entry name" value="GCV_H"/>
</dbReference>
<dbReference type="InterPro" id="IPR033753">
    <property type="entry name" value="GCV_H/Fam206"/>
</dbReference>
<dbReference type="InterPro" id="IPR017453">
    <property type="entry name" value="GCV_H_sub"/>
</dbReference>
<dbReference type="InterPro" id="IPR011053">
    <property type="entry name" value="Single_hybrid_motif"/>
</dbReference>
<dbReference type="NCBIfam" id="TIGR00527">
    <property type="entry name" value="gcvH"/>
    <property type="match status" value="1"/>
</dbReference>
<dbReference type="NCBIfam" id="NF002270">
    <property type="entry name" value="PRK01202.1"/>
    <property type="match status" value="1"/>
</dbReference>
<dbReference type="PANTHER" id="PTHR11715">
    <property type="entry name" value="GLYCINE CLEAVAGE SYSTEM H PROTEIN"/>
    <property type="match status" value="1"/>
</dbReference>
<dbReference type="PANTHER" id="PTHR11715:SF3">
    <property type="entry name" value="GLYCINE CLEAVAGE SYSTEM H PROTEIN-RELATED"/>
    <property type="match status" value="1"/>
</dbReference>
<dbReference type="Pfam" id="PF01597">
    <property type="entry name" value="GCV_H"/>
    <property type="match status" value="1"/>
</dbReference>
<dbReference type="SUPFAM" id="SSF51230">
    <property type="entry name" value="Single hybrid motif"/>
    <property type="match status" value="1"/>
</dbReference>
<dbReference type="PROSITE" id="PS50968">
    <property type="entry name" value="BIOTINYL_LIPOYL"/>
    <property type="match status" value="1"/>
</dbReference>
<dbReference type="PROSITE" id="PS00189">
    <property type="entry name" value="LIPOYL"/>
    <property type="match status" value="1"/>
</dbReference>
<reference key="1">
    <citation type="journal article" date="2005" name="Proc. Natl. Acad. Sci. U.S.A.">
        <title>Whole genome sequence of Staphylococcus saprophyticus reveals the pathogenesis of uncomplicated urinary tract infection.</title>
        <authorList>
            <person name="Kuroda M."/>
            <person name="Yamashita A."/>
            <person name="Hirakawa H."/>
            <person name="Kumano M."/>
            <person name="Morikawa K."/>
            <person name="Higashide M."/>
            <person name="Maruyama A."/>
            <person name="Inose Y."/>
            <person name="Matoba K."/>
            <person name="Toh H."/>
            <person name="Kuhara S."/>
            <person name="Hattori M."/>
            <person name="Ohta T."/>
        </authorList>
    </citation>
    <scope>NUCLEOTIDE SEQUENCE [LARGE SCALE GENOMIC DNA]</scope>
    <source>
        <strain>ATCC 15305 / DSM 20229 / NCIMB 8711 / NCTC 7292 / S-41</strain>
    </source>
</reference>
<sequence length="126" mass="14101">MAVPSELKYSKEHEWVKVEGNTVTIGITEYAQGELGDIVFVELPEVDDEINEGDTFGSVESVKTVSELYAPVSGKVLESNEELEDSPEFVNESPYEKAWMVKVELSDESQLEELMSAEQYSEMIGE</sequence>
<protein>
    <recommendedName>
        <fullName evidence="1">Glycine cleavage system H protein</fullName>
    </recommendedName>
    <alternativeName>
        <fullName evidence="1">Octanoyl/lipoyl carrier protein</fullName>
    </alternativeName>
</protein>
<keyword id="KW-0450">Lipoyl</keyword>
<keyword id="KW-1185">Reference proteome</keyword>
<comment type="function">
    <text evidence="1">The glycine cleavage system catalyzes the degradation of glycine. The H protein shuttles the methylamine group of glycine from the P protein to the T protein.</text>
</comment>
<comment type="function">
    <text evidence="1">Is also involved in protein lipoylation via its role as an octanoyl/lipoyl carrier protein intermediate.</text>
</comment>
<comment type="cofactor">
    <cofactor evidence="1">
        <name>(R)-lipoate</name>
        <dbReference type="ChEBI" id="CHEBI:83088"/>
    </cofactor>
    <text evidence="1">Binds 1 lipoyl cofactor covalently.</text>
</comment>
<comment type="subunit">
    <text evidence="1">The glycine cleavage system is composed of four proteins: P, T, L and H.</text>
</comment>
<comment type="similarity">
    <text evidence="1">Belongs to the GcvH family.</text>
</comment>
<proteinExistence type="inferred from homology"/>
<organism>
    <name type="scientific">Staphylococcus saprophyticus subsp. saprophyticus (strain ATCC 15305 / DSM 20229 / NCIMB 8711 / NCTC 7292 / S-41)</name>
    <dbReference type="NCBI Taxonomy" id="342451"/>
    <lineage>
        <taxon>Bacteria</taxon>
        <taxon>Bacillati</taxon>
        <taxon>Bacillota</taxon>
        <taxon>Bacilli</taxon>
        <taxon>Bacillales</taxon>
        <taxon>Staphylococcaceae</taxon>
        <taxon>Staphylococcus</taxon>
    </lineage>
</organism>
<evidence type="ECO:0000255" key="1">
    <source>
        <dbReference type="HAMAP-Rule" id="MF_00272"/>
    </source>
</evidence>
<evidence type="ECO:0000255" key="2">
    <source>
        <dbReference type="PROSITE-ProRule" id="PRU01066"/>
    </source>
</evidence>
<name>GCSH_STAS1</name>
<gene>
    <name evidence="1" type="primary">gcvH</name>
    <name type="ordered locus">SSP1869</name>
</gene>
<accession>Q49W45</accession>